<keyword id="KW-0963">Cytoplasm</keyword>
<keyword id="KW-0396">Initiation factor</keyword>
<keyword id="KW-0648">Protein biosynthesis</keyword>
<keyword id="KW-1185">Reference proteome</keyword>
<dbReference type="EMBL" id="BC122673">
    <property type="protein sequence ID" value="AAI22674.1"/>
    <property type="molecule type" value="mRNA"/>
</dbReference>
<dbReference type="RefSeq" id="NP_001069211.1">
    <property type="nucleotide sequence ID" value="NM_001075743.1"/>
</dbReference>
<dbReference type="SMR" id="Q0IIF2"/>
<dbReference type="FunCoup" id="Q0IIF2">
    <property type="interactions" value="5135"/>
</dbReference>
<dbReference type="STRING" id="9913.ENSBTAP00000009560"/>
<dbReference type="PaxDb" id="9913-ENSBTAP00000009560"/>
<dbReference type="GeneID" id="516670"/>
<dbReference type="KEGG" id="bta:516670"/>
<dbReference type="CTD" id="1967"/>
<dbReference type="VEuPathDB" id="HostDB:ENSBTAG00000007269"/>
<dbReference type="eggNOG" id="KOG1466">
    <property type="taxonomic scope" value="Eukaryota"/>
</dbReference>
<dbReference type="HOGENOM" id="CLU_016218_0_2_1"/>
<dbReference type="InParanoid" id="Q0IIF2"/>
<dbReference type="OMA" id="GDWESCK"/>
<dbReference type="OrthoDB" id="10249309at2759"/>
<dbReference type="TreeFam" id="TF101505"/>
<dbReference type="Reactome" id="R-BTA-72731">
    <property type="pathway name" value="Recycling of eIF2:GDP"/>
</dbReference>
<dbReference type="Proteomes" id="UP000009136">
    <property type="component" value="Chromosome 17"/>
</dbReference>
<dbReference type="Bgee" id="ENSBTAG00000007269">
    <property type="expression patterns" value="Expressed in oocyte and 103 other cell types or tissues"/>
</dbReference>
<dbReference type="GO" id="GO:0005829">
    <property type="term" value="C:cytosol"/>
    <property type="evidence" value="ECO:0007669"/>
    <property type="project" value="UniProtKB-SubCell"/>
</dbReference>
<dbReference type="GO" id="GO:0005851">
    <property type="term" value="C:eukaryotic translation initiation factor 2B complex"/>
    <property type="evidence" value="ECO:0000250"/>
    <property type="project" value="UniProtKB"/>
</dbReference>
<dbReference type="GO" id="GO:0005085">
    <property type="term" value="F:guanyl-nucleotide exchange factor activity"/>
    <property type="evidence" value="ECO:0000250"/>
    <property type="project" value="UniProtKB"/>
</dbReference>
<dbReference type="GO" id="GO:0003743">
    <property type="term" value="F:translation initiation factor activity"/>
    <property type="evidence" value="ECO:0007669"/>
    <property type="project" value="UniProtKB-KW"/>
</dbReference>
<dbReference type="GO" id="GO:0002183">
    <property type="term" value="P:cytoplasmic translational initiation"/>
    <property type="evidence" value="ECO:0000250"/>
    <property type="project" value="UniProtKB"/>
</dbReference>
<dbReference type="GO" id="GO:0006413">
    <property type="term" value="P:translational initiation"/>
    <property type="evidence" value="ECO:0000318"/>
    <property type="project" value="GO_Central"/>
</dbReference>
<dbReference type="FunFam" id="1.20.120.1070:FF:000001">
    <property type="entry name" value="Eukaryotic translation initiation factor 2B subunit alpha"/>
    <property type="match status" value="1"/>
</dbReference>
<dbReference type="FunFam" id="3.40.50.10470:FF:000001">
    <property type="entry name" value="Translation initiation factor eIF-2B subunit alpha"/>
    <property type="match status" value="1"/>
</dbReference>
<dbReference type="Gene3D" id="3.40.50.10470">
    <property type="entry name" value="Translation initiation factor eif-2b, domain 2"/>
    <property type="match status" value="1"/>
</dbReference>
<dbReference type="Gene3D" id="1.20.120.1070">
    <property type="entry name" value="Translation initiation factor eIF-2B, N-terminal domain"/>
    <property type="match status" value="1"/>
</dbReference>
<dbReference type="InterPro" id="IPR051501">
    <property type="entry name" value="eIF2B_alpha/beta/delta"/>
</dbReference>
<dbReference type="InterPro" id="IPR042528">
    <property type="entry name" value="elF-2B_alpha_N"/>
</dbReference>
<dbReference type="InterPro" id="IPR000649">
    <property type="entry name" value="IF-2B-related"/>
</dbReference>
<dbReference type="InterPro" id="IPR042529">
    <property type="entry name" value="IF_2B-like_C"/>
</dbReference>
<dbReference type="InterPro" id="IPR037171">
    <property type="entry name" value="NagB/RpiA_transferase-like"/>
</dbReference>
<dbReference type="PANTHER" id="PTHR45860">
    <property type="entry name" value="TRANSLATION INITIATION FACTOR EIF-2B SUBUNIT ALPHA"/>
    <property type="match status" value="1"/>
</dbReference>
<dbReference type="PANTHER" id="PTHR45860:SF1">
    <property type="entry name" value="TRANSLATION INITIATION FACTOR EIF-2B SUBUNIT ALPHA"/>
    <property type="match status" value="1"/>
</dbReference>
<dbReference type="Pfam" id="PF01008">
    <property type="entry name" value="IF-2B"/>
    <property type="match status" value="1"/>
</dbReference>
<dbReference type="SUPFAM" id="SSF100950">
    <property type="entry name" value="NagB/RpiA/CoA transferase-like"/>
    <property type="match status" value="1"/>
</dbReference>
<comment type="function">
    <text evidence="1">Acts as a component of the translation initiation factor 2B (eIF2B) complex, which catalyzes the exchange of GDP for GTP on eukaryotic initiation factor 2 (eIF2) gamma subunit. Its guanine nucleotide exchange factor activity is repressed when bound to eIF2 complex phosphorylated on the alpha subunit, thereby limiting the amount of methionyl-initiator methionine tRNA available to the ribosome and consequently global translation is repressed.</text>
</comment>
<comment type="activity regulation">
    <text evidence="1">Activated by the chemical integrated stress response (ISR) inhibitor ISRIB which stimulates guanine nucleotide exchange factor activity for both phosphorylated and unphosphorylated eIF2.</text>
</comment>
<comment type="subunit">
    <text evidence="1">Component of the translation initiation factor 2B (eIF2B) complex which is a heterodecamer of two sets of five different subunits: alpha, beta, gamma, delta and epsilon. Subunits alpha, beta and delta comprise a regulatory subcomplex and subunits epsilon and gamma comprise a catalytic subcomplex. Within the complex, the hexameric regulatory complex resides at the center, with the two heterodimeric catalytic subcomplexes bound on opposite sides.</text>
</comment>
<comment type="subcellular location">
    <subcellularLocation>
        <location evidence="2">Cytoplasm</location>
        <location evidence="2">Cytosol</location>
    </subcellularLocation>
</comment>
<comment type="similarity">
    <text evidence="3">Belongs to the eIF-2B alpha/beta/delta subunits family.</text>
</comment>
<gene>
    <name type="primary">EIF2B1</name>
</gene>
<feature type="chain" id="PRO_0000283062" description="Translation initiation factor eIF2B subunit alpha">
    <location>
        <begin position="1"/>
        <end position="305"/>
    </location>
</feature>
<sequence>MDNTELIEYFKSQIKEDPDMASAVAAIRTLLEYLRRDTGETIQGLRANLTSAIETLCGVDSSVAVSSGGELFLRFISLTSLEYSDYSKCKKIMIERGEIFLRRISLSRNKIADLCHTFIKDGARILTHAYSRVVLRVLEAAVAAKKRFSVYITESQPDLSGKKMAKALCHLNVPVTVVLDAAVGYIMEKVDLVIVGAEGVVENGGIINKIGTNQMAVCAKAQNKPFYVVAESFKFVRLFPLNQQDVPDKFKYKADTLKSVQTGQDLREEHPWVDYTSPSLITLLFTDLGVLTPSAVSDELIKLYL</sequence>
<evidence type="ECO:0000250" key="1">
    <source>
        <dbReference type="UniProtKB" id="Q14232"/>
    </source>
</evidence>
<evidence type="ECO:0000250" key="2">
    <source>
        <dbReference type="UniProtKB" id="Q9USP0"/>
    </source>
</evidence>
<evidence type="ECO:0000305" key="3"/>
<proteinExistence type="evidence at transcript level"/>
<protein>
    <recommendedName>
        <fullName>Translation initiation factor eIF2B subunit alpha</fullName>
    </recommendedName>
    <alternativeName>
        <fullName>eIF2B GDP-GTP exchange factor subunit alpha</fullName>
    </alternativeName>
</protein>
<name>EI2BA_BOVIN</name>
<organism>
    <name type="scientific">Bos taurus</name>
    <name type="common">Bovine</name>
    <dbReference type="NCBI Taxonomy" id="9913"/>
    <lineage>
        <taxon>Eukaryota</taxon>
        <taxon>Metazoa</taxon>
        <taxon>Chordata</taxon>
        <taxon>Craniata</taxon>
        <taxon>Vertebrata</taxon>
        <taxon>Euteleostomi</taxon>
        <taxon>Mammalia</taxon>
        <taxon>Eutheria</taxon>
        <taxon>Laurasiatheria</taxon>
        <taxon>Artiodactyla</taxon>
        <taxon>Ruminantia</taxon>
        <taxon>Pecora</taxon>
        <taxon>Bovidae</taxon>
        <taxon>Bovinae</taxon>
        <taxon>Bos</taxon>
    </lineage>
</organism>
<reference key="1">
    <citation type="submission" date="2006-08" db="EMBL/GenBank/DDBJ databases">
        <authorList>
            <consortium name="NIH - Mammalian Gene Collection (MGC) project"/>
        </authorList>
    </citation>
    <scope>NUCLEOTIDE SEQUENCE [LARGE SCALE MRNA]</scope>
    <source>
        <strain>Hereford</strain>
        <tissue>Fetal muscle</tissue>
    </source>
</reference>
<accession>Q0IIF2</accession>